<organism>
    <name type="scientific">Shewanella loihica (strain ATCC BAA-1088 / PV-4)</name>
    <dbReference type="NCBI Taxonomy" id="323850"/>
    <lineage>
        <taxon>Bacteria</taxon>
        <taxon>Pseudomonadati</taxon>
        <taxon>Pseudomonadota</taxon>
        <taxon>Gammaproteobacteria</taxon>
        <taxon>Alteromonadales</taxon>
        <taxon>Shewanellaceae</taxon>
        <taxon>Shewanella</taxon>
    </lineage>
</organism>
<accession>A3QFN4</accession>
<sequence length="364" mass="39170">MSGNSIGQNFVVTTFGESHGKALGCIIDGCPPGLAIDEADMQHDLDRRRPGTSRYTTARREPDQVKILSGVFEGQTTGTSIGLVIENTDQRSQDYSNIKDQFRPGHADYTYQQKYGLRDYRGGGRSSARETAMRVAAGAVAKKYLKQVHGIEIKGYLSQLGPICAEILDFDQVEHNAFFFPDAAKLEQLDEYMRELKKSGDSIGAKVSVVATNVPVGLGEPVFDRLDADIAHALMGINAVKGVEIGDGFAVVNQKGSEHRDLMSPEGFASNHAGGILGGISSGQPIVAHIAMKPTSSISVPGESMTVQGERAEVVTKGRHDPCVGIRAVPIAEAMLAIVLMDHLLRHRAQNMNVESITPVIGMK</sequence>
<dbReference type="EC" id="4.2.3.5" evidence="1"/>
<dbReference type="EMBL" id="CP000606">
    <property type="protein sequence ID" value="ABO24282.1"/>
    <property type="molecule type" value="Genomic_DNA"/>
</dbReference>
<dbReference type="RefSeq" id="WP_011866213.1">
    <property type="nucleotide sequence ID" value="NC_009092.1"/>
</dbReference>
<dbReference type="SMR" id="A3QFN4"/>
<dbReference type="STRING" id="323850.Shew_2416"/>
<dbReference type="KEGG" id="slo:Shew_2416"/>
<dbReference type="eggNOG" id="COG0082">
    <property type="taxonomic scope" value="Bacteria"/>
</dbReference>
<dbReference type="HOGENOM" id="CLU_034547_0_2_6"/>
<dbReference type="OrthoDB" id="9771806at2"/>
<dbReference type="UniPathway" id="UPA00053">
    <property type="reaction ID" value="UER00090"/>
</dbReference>
<dbReference type="Proteomes" id="UP000001558">
    <property type="component" value="Chromosome"/>
</dbReference>
<dbReference type="GO" id="GO:0005829">
    <property type="term" value="C:cytosol"/>
    <property type="evidence" value="ECO:0007669"/>
    <property type="project" value="TreeGrafter"/>
</dbReference>
<dbReference type="GO" id="GO:0004107">
    <property type="term" value="F:chorismate synthase activity"/>
    <property type="evidence" value="ECO:0007669"/>
    <property type="project" value="UniProtKB-UniRule"/>
</dbReference>
<dbReference type="GO" id="GO:0010181">
    <property type="term" value="F:FMN binding"/>
    <property type="evidence" value="ECO:0007669"/>
    <property type="project" value="TreeGrafter"/>
</dbReference>
<dbReference type="GO" id="GO:0008652">
    <property type="term" value="P:amino acid biosynthetic process"/>
    <property type="evidence" value="ECO:0007669"/>
    <property type="project" value="UniProtKB-KW"/>
</dbReference>
<dbReference type="GO" id="GO:0009073">
    <property type="term" value="P:aromatic amino acid family biosynthetic process"/>
    <property type="evidence" value="ECO:0007669"/>
    <property type="project" value="UniProtKB-KW"/>
</dbReference>
<dbReference type="GO" id="GO:0009423">
    <property type="term" value="P:chorismate biosynthetic process"/>
    <property type="evidence" value="ECO:0007669"/>
    <property type="project" value="UniProtKB-UniRule"/>
</dbReference>
<dbReference type="CDD" id="cd07304">
    <property type="entry name" value="Chorismate_synthase"/>
    <property type="match status" value="1"/>
</dbReference>
<dbReference type="FunFam" id="3.60.150.10:FF:000001">
    <property type="entry name" value="Chorismate synthase"/>
    <property type="match status" value="1"/>
</dbReference>
<dbReference type="Gene3D" id="3.60.150.10">
    <property type="entry name" value="Chorismate synthase AroC"/>
    <property type="match status" value="1"/>
</dbReference>
<dbReference type="HAMAP" id="MF_00300">
    <property type="entry name" value="Chorismate_synth"/>
    <property type="match status" value="1"/>
</dbReference>
<dbReference type="InterPro" id="IPR000453">
    <property type="entry name" value="Chorismate_synth"/>
</dbReference>
<dbReference type="InterPro" id="IPR035904">
    <property type="entry name" value="Chorismate_synth_AroC_sf"/>
</dbReference>
<dbReference type="InterPro" id="IPR020541">
    <property type="entry name" value="Chorismate_synthase_CS"/>
</dbReference>
<dbReference type="NCBIfam" id="TIGR00033">
    <property type="entry name" value="aroC"/>
    <property type="match status" value="1"/>
</dbReference>
<dbReference type="NCBIfam" id="NF003793">
    <property type="entry name" value="PRK05382.1"/>
    <property type="match status" value="1"/>
</dbReference>
<dbReference type="PANTHER" id="PTHR21085">
    <property type="entry name" value="CHORISMATE SYNTHASE"/>
    <property type="match status" value="1"/>
</dbReference>
<dbReference type="PANTHER" id="PTHR21085:SF0">
    <property type="entry name" value="CHORISMATE SYNTHASE"/>
    <property type="match status" value="1"/>
</dbReference>
<dbReference type="Pfam" id="PF01264">
    <property type="entry name" value="Chorismate_synt"/>
    <property type="match status" value="1"/>
</dbReference>
<dbReference type="PIRSF" id="PIRSF001456">
    <property type="entry name" value="Chorismate_synth"/>
    <property type="match status" value="1"/>
</dbReference>
<dbReference type="SUPFAM" id="SSF103263">
    <property type="entry name" value="Chorismate synthase, AroC"/>
    <property type="match status" value="1"/>
</dbReference>
<dbReference type="PROSITE" id="PS00787">
    <property type="entry name" value="CHORISMATE_SYNTHASE_1"/>
    <property type="match status" value="1"/>
</dbReference>
<dbReference type="PROSITE" id="PS00788">
    <property type="entry name" value="CHORISMATE_SYNTHASE_2"/>
    <property type="match status" value="1"/>
</dbReference>
<dbReference type="PROSITE" id="PS00789">
    <property type="entry name" value="CHORISMATE_SYNTHASE_3"/>
    <property type="match status" value="1"/>
</dbReference>
<feature type="chain" id="PRO_1000022549" description="Chorismate synthase">
    <location>
        <begin position="1"/>
        <end position="364"/>
    </location>
</feature>
<feature type="binding site" evidence="1">
    <location>
        <position position="48"/>
    </location>
    <ligand>
        <name>NADP(+)</name>
        <dbReference type="ChEBI" id="CHEBI:58349"/>
    </ligand>
</feature>
<feature type="binding site" evidence="1">
    <location>
        <position position="54"/>
    </location>
    <ligand>
        <name>NADP(+)</name>
        <dbReference type="ChEBI" id="CHEBI:58349"/>
    </ligand>
</feature>
<feature type="binding site" evidence="1">
    <location>
        <begin position="125"/>
        <end position="127"/>
    </location>
    <ligand>
        <name>FMN</name>
        <dbReference type="ChEBI" id="CHEBI:58210"/>
    </ligand>
</feature>
<feature type="binding site" evidence="1">
    <location>
        <begin position="238"/>
        <end position="239"/>
    </location>
    <ligand>
        <name>FMN</name>
        <dbReference type="ChEBI" id="CHEBI:58210"/>
    </ligand>
</feature>
<feature type="binding site" evidence="1">
    <location>
        <position position="278"/>
    </location>
    <ligand>
        <name>FMN</name>
        <dbReference type="ChEBI" id="CHEBI:58210"/>
    </ligand>
</feature>
<feature type="binding site" evidence="1">
    <location>
        <begin position="293"/>
        <end position="297"/>
    </location>
    <ligand>
        <name>FMN</name>
        <dbReference type="ChEBI" id="CHEBI:58210"/>
    </ligand>
</feature>
<feature type="binding site" evidence="1">
    <location>
        <position position="319"/>
    </location>
    <ligand>
        <name>FMN</name>
        <dbReference type="ChEBI" id="CHEBI:58210"/>
    </ligand>
</feature>
<proteinExistence type="inferred from homology"/>
<keyword id="KW-0028">Amino-acid biosynthesis</keyword>
<keyword id="KW-0057">Aromatic amino acid biosynthesis</keyword>
<keyword id="KW-0274">FAD</keyword>
<keyword id="KW-0285">Flavoprotein</keyword>
<keyword id="KW-0288">FMN</keyword>
<keyword id="KW-0456">Lyase</keyword>
<keyword id="KW-0521">NADP</keyword>
<keyword id="KW-1185">Reference proteome</keyword>
<protein>
    <recommendedName>
        <fullName evidence="1">Chorismate synthase</fullName>
        <shortName evidence="1">CS</shortName>
        <ecNumber evidence="1">4.2.3.5</ecNumber>
    </recommendedName>
    <alternativeName>
        <fullName evidence="1">5-enolpyruvylshikimate-3-phosphate phospholyase</fullName>
    </alternativeName>
</protein>
<name>AROC_SHELP</name>
<gene>
    <name evidence="1" type="primary">aroC</name>
    <name type="ordered locus">Shew_2416</name>
</gene>
<comment type="function">
    <text evidence="1">Catalyzes the anti-1,4-elimination of the C-3 phosphate and the C-6 proR hydrogen from 5-enolpyruvylshikimate-3-phosphate (EPSP) to yield chorismate, which is the branch point compound that serves as the starting substrate for the three terminal pathways of aromatic amino acid biosynthesis. This reaction introduces a second double bond into the aromatic ring system.</text>
</comment>
<comment type="catalytic activity">
    <reaction evidence="1">
        <text>5-O-(1-carboxyvinyl)-3-phosphoshikimate = chorismate + phosphate</text>
        <dbReference type="Rhea" id="RHEA:21020"/>
        <dbReference type="ChEBI" id="CHEBI:29748"/>
        <dbReference type="ChEBI" id="CHEBI:43474"/>
        <dbReference type="ChEBI" id="CHEBI:57701"/>
        <dbReference type="EC" id="4.2.3.5"/>
    </reaction>
</comment>
<comment type="cofactor">
    <cofactor evidence="1">
        <name>FMNH2</name>
        <dbReference type="ChEBI" id="CHEBI:57618"/>
    </cofactor>
    <text evidence="1">Reduced FMN (FMNH(2)).</text>
</comment>
<comment type="pathway">
    <text evidence="1">Metabolic intermediate biosynthesis; chorismate biosynthesis; chorismate from D-erythrose 4-phosphate and phosphoenolpyruvate: step 7/7.</text>
</comment>
<comment type="subunit">
    <text evidence="1">Homotetramer.</text>
</comment>
<comment type="similarity">
    <text evidence="1">Belongs to the chorismate synthase family.</text>
</comment>
<reference key="1">
    <citation type="submission" date="2007-03" db="EMBL/GenBank/DDBJ databases">
        <title>Complete sequence of Shewanella loihica PV-4.</title>
        <authorList>
            <consortium name="US DOE Joint Genome Institute"/>
            <person name="Copeland A."/>
            <person name="Lucas S."/>
            <person name="Lapidus A."/>
            <person name="Barry K."/>
            <person name="Detter J.C."/>
            <person name="Glavina del Rio T."/>
            <person name="Hammon N."/>
            <person name="Israni S."/>
            <person name="Dalin E."/>
            <person name="Tice H."/>
            <person name="Pitluck S."/>
            <person name="Chain P."/>
            <person name="Malfatti S."/>
            <person name="Shin M."/>
            <person name="Vergez L."/>
            <person name="Schmutz J."/>
            <person name="Larimer F."/>
            <person name="Land M."/>
            <person name="Hauser L."/>
            <person name="Kyrpides N."/>
            <person name="Mikhailova N."/>
            <person name="Romine M.F."/>
            <person name="Serres G."/>
            <person name="Fredrickson J."/>
            <person name="Tiedje J."/>
            <person name="Richardson P."/>
        </authorList>
    </citation>
    <scope>NUCLEOTIDE SEQUENCE [LARGE SCALE GENOMIC DNA]</scope>
    <source>
        <strain>ATCC BAA-1088 / PV-4</strain>
    </source>
</reference>
<evidence type="ECO:0000255" key="1">
    <source>
        <dbReference type="HAMAP-Rule" id="MF_00300"/>
    </source>
</evidence>